<gene>
    <name type="primary">RpL38</name>
</gene>
<comment type="similarity">
    <text evidence="1">Belongs to the eukaryotic ribosomal protein eL38 family.</text>
</comment>
<protein>
    <recommendedName>
        <fullName evidence="1">Large ribosomal subunit protein eL38</fullName>
    </recommendedName>
    <alternativeName>
        <fullName>60S ribosomal protein L38</fullName>
    </alternativeName>
</protein>
<organism>
    <name type="scientific">Plutella xylostella</name>
    <name type="common">Diamondback moth</name>
    <name type="synonym">Plutella maculipennis</name>
    <dbReference type="NCBI Taxonomy" id="51655"/>
    <lineage>
        <taxon>Eukaryota</taxon>
        <taxon>Metazoa</taxon>
        <taxon>Ecdysozoa</taxon>
        <taxon>Arthropoda</taxon>
        <taxon>Hexapoda</taxon>
        <taxon>Insecta</taxon>
        <taxon>Pterygota</taxon>
        <taxon>Neoptera</taxon>
        <taxon>Endopterygota</taxon>
        <taxon>Lepidoptera</taxon>
        <taxon>Glossata</taxon>
        <taxon>Ditrysia</taxon>
        <taxon>Yponomeutoidea</taxon>
        <taxon>Plutellidae</taxon>
        <taxon>Plutella</taxon>
    </lineage>
</organism>
<keyword id="KW-0687">Ribonucleoprotein</keyword>
<keyword id="KW-0689">Ribosomal protein</keyword>
<accession>Q6F450</accession>
<reference key="1">
    <citation type="submission" date="2004-07" db="EMBL/GenBank/DDBJ databases">
        <title>Construction and EST analysis of full-length cDNA libraries from immunized diamond back moth, Plutella xylostella.</title>
        <authorList>
            <person name="Eum J.H."/>
            <person name="Yoe S.M."/>
            <person name="Seo Y.R."/>
            <person name="Kang S.W."/>
            <person name="Han S.S."/>
        </authorList>
    </citation>
    <scope>NUCLEOTIDE SEQUENCE [LARGE SCALE MRNA]</scope>
</reference>
<proteinExistence type="inferred from homology"/>
<name>RL38_PLUXY</name>
<feature type="chain" id="PRO_0000319565" description="Large ribosomal subunit protein eL38">
    <location>
        <begin position="1"/>
        <end position="70"/>
    </location>
</feature>
<sequence length="70" mass="8241">MPREIKDIKDFLLKARRKDAKSVKIKKNPENVKFKVRCSRFLYTLVITDKEKAEKLKQSLPPGLQVKEVK</sequence>
<evidence type="ECO:0000305" key="1"/>
<dbReference type="EMBL" id="AB180440">
    <property type="protein sequence ID" value="BAD26684.1"/>
    <property type="molecule type" value="mRNA"/>
</dbReference>
<dbReference type="RefSeq" id="XP_011555049.1">
    <property type="nucleotide sequence ID" value="XM_011556747.1"/>
</dbReference>
<dbReference type="SMR" id="Q6F450"/>
<dbReference type="GeneID" id="105386232"/>
<dbReference type="KEGG" id="pxy:105386232"/>
<dbReference type="CTD" id="6169"/>
<dbReference type="OrthoDB" id="10250488at2759"/>
<dbReference type="GO" id="GO:0022625">
    <property type="term" value="C:cytosolic large ribosomal subunit"/>
    <property type="evidence" value="ECO:0007669"/>
    <property type="project" value="TreeGrafter"/>
</dbReference>
<dbReference type="GO" id="GO:0003735">
    <property type="term" value="F:structural constituent of ribosome"/>
    <property type="evidence" value="ECO:0007669"/>
    <property type="project" value="InterPro"/>
</dbReference>
<dbReference type="GO" id="GO:0022618">
    <property type="term" value="P:protein-RNA complex assembly"/>
    <property type="evidence" value="ECO:0007669"/>
    <property type="project" value="TreeGrafter"/>
</dbReference>
<dbReference type="GO" id="GO:0006412">
    <property type="term" value="P:translation"/>
    <property type="evidence" value="ECO:0007669"/>
    <property type="project" value="InterPro"/>
</dbReference>
<dbReference type="FunFam" id="3.30.720.90:FF:000001">
    <property type="entry name" value="60S ribosomal protein L38"/>
    <property type="match status" value="1"/>
</dbReference>
<dbReference type="Gene3D" id="3.30.720.90">
    <property type="match status" value="1"/>
</dbReference>
<dbReference type="InterPro" id="IPR002675">
    <property type="entry name" value="Ribosomal_eL38"/>
</dbReference>
<dbReference type="InterPro" id="IPR038464">
    <property type="entry name" value="Ribosomal_eL38_sf"/>
</dbReference>
<dbReference type="PANTHER" id="PTHR10965">
    <property type="entry name" value="60S RIBOSOMAL PROTEIN L38"/>
    <property type="match status" value="1"/>
</dbReference>
<dbReference type="PANTHER" id="PTHR10965:SF0">
    <property type="entry name" value="LARGE RIBOSOMAL SUBUNIT PROTEIN EL38"/>
    <property type="match status" value="1"/>
</dbReference>
<dbReference type="Pfam" id="PF01781">
    <property type="entry name" value="Ribosomal_L38e"/>
    <property type="match status" value="1"/>
</dbReference>